<comment type="similarity">
    <text evidence="1">Belongs to the SfsA family.</text>
</comment>
<protein>
    <recommendedName>
        <fullName evidence="1">Sugar fermentation stimulation protein homolog</fullName>
    </recommendedName>
</protein>
<name>SFSA_SHEFN</name>
<accession>Q07Y03</accession>
<feature type="chain" id="PRO_1000008025" description="Sugar fermentation stimulation protein homolog">
    <location>
        <begin position="1"/>
        <end position="234"/>
    </location>
</feature>
<proteinExistence type="inferred from homology"/>
<dbReference type="EMBL" id="CP000447">
    <property type="protein sequence ID" value="ABI73111.1"/>
    <property type="molecule type" value="Genomic_DNA"/>
</dbReference>
<dbReference type="RefSeq" id="WP_011638714.1">
    <property type="nucleotide sequence ID" value="NC_008345.1"/>
</dbReference>
<dbReference type="SMR" id="Q07Y03"/>
<dbReference type="STRING" id="318167.Sfri_3275"/>
<dbReference type="KEGG" id="sfr:Sfri_3275"/>
<dbReference type="eggNOG" id="COG1489">
    <property type="taxonomic scope" value="Bacteria"/>
</dbReference>
<dbReference type="HOGENOM" id="CLU_052299_2_0_6"/>
<dbReference type="OrthoDB" id="9802365at2"/>
<dbReference type="Proteomes" id="UP000000684">
    <property type="component" value="Chromosome"/>
</dbReference>
<dbReference type="GO" id="GO:0003677">
    <property type="term" value="F:DNA binding"/>
    <property type="evidence" value="ECO:0007669"/>
    <property type="project" value="InterPro"/>
</dbReference>
<dbReference type="CDD" id="cd22359">
    <property type="entry name" value="SfsA-like_bacterial"/>
    <property type="match status" value="1"/>
</dbReference>
<dbReference type="FunFam" id="2.40.50.580:FF:000001">
    <property type="entry name" value="Sugar fermentation stimulation protein A"/>
    <property type="match status" value="1"/>
</dbReference>
<dbReference type="FunFam" id="3.40.1350.60:FF:000001">
    <property type="entry name" value="Sugar fermentation stimulation protein A"/>
    <property type="match status" value="1"/>
</dbReference>
<dbReference type="Gene3D" id="2.40.50.580">
    <property type="match status" value="1"/>
</dbReference>
<dbReference type="Gene3D" id="3.40.1350.60">
    <property type="match status" value="1"/>
</dbReference>
<dbReference type="HAMAP" id="MF_00095">
    <property type="entry name" value="SfsA"/>
    <property type="match status" value="1"/>
</dbReference>
<dbReference type="InterPro" id="IPR005224">
    <property type="entry name" value="SfsA"/>
</dbReference>
<dbReference type="InterPro" id="IPR040452">
    <property type="entry name" value="SfsA_C"/>
</dbReference>
<dbReference type="InterPro" id="IPR041465">
    <property type="entry name" value="SfsA_N"/>
</dbReference>
<dbReference type="NCBIfam" id="TIGR00230">
    <property type="entry name" value="sfsA"/>
    <property type="match status" value="1"/>
</dbReference>
<dbReference type="PANTHER" id="PTHR30545">
    <property type="entry name" value="SUGAR FERMENTATION STIMULATION PROTEIN A"/>
    <property type="match status" value="1"/>
</dbReference>
<dbReference type="PANTHER" id="PTHR30545:SF2">
    <property type="entry name" value="SUGAR FERMENTATION STIMULATION PROTEIN A"/>
    <property type="match status" value="1"/>
</dbReference>
<dbReference type="Pfam" id="PF03749">
    <property type="entry name" value="SfsA"/>
    <property type="match status" value="1"/>
</dbReference>
<dbReference type="Pfam" id="PF17746">
    <property type="entry name" value="SfsA_N"/>
    <property type="match status" value="1"/>
</dbReference>
<evidence type="ECO:0000255" key="1">
    <source>
        <dbReference type="HAMAP-Rule" id="MF_00095"/>
    </source>
</evidence>
<keyword id="KW-1185">Reference proteome</keyword>
<sequence>MKFTPELESGVLIKRYKRFLADIMLPNGQEITIHCPNTGSMKNCLFPGEKVWFSTSDNPKRKYAHTWELMQTDQQHYIGINTGRANALAEEAINRQVITELLGYEHLKREVKYGSENSRIDILLTSQNRPECYIEVKSCTLLEDQMGYFPDAVTTRGQKHLRELIHMVELGHRAVLLFVVQHSAITSVKPARHIDPHYADLLEQAVANGVEVLAYKTALSPQGSLITSACKVML</sequence>
<organism>
    <name type="scientific">Shewanella frigidimarina (strain NCIMB 400)</name>
    <dbReference type="NCBI Taxonomy" id="318167"/>
    <lineage>
        <taxon>Bacteria</taxon>
        <taxon>Pseudomonadati</taxon>
        <taxon>Pseudomonadota</taxon>
        <taxon>Gammaproteobacteria</taxon>
        <taxon>Alteromonadales</taxon>
        <taxon>Shewanellaceae</taxon>
        <taxon>Shewanella</taxon>
    </lineage>
</organism>
<reference key="1">
    <citation type="submission" date="2006-08" db="EMBL/GenBank/DDBJ databases">
        <title>Complete sequence of Shewanella frigidimarina NCIMB 400.</title>
        <authorList>
            <consortium name="US DOE Joint Genome Institute"/>
            <person name="Copeland A."/>
            <person name="Lucas S."/>
            <person name="Lapidus A."/>
            <person name="Barry K."/>
            <person name="Detter J.C."/>
            <person name="Glavina del Rio T."/>
            <person name="Hammon N."/>
            <person name="Israni S."/>
            <person name="Dalin E."/>
            <person name="Tice H."/>
            <person name="Pitluck S."/>
            <person name="Fredrickson J.K."/>
            <person name="Kolker E."/>
            <person name="McCuel L.A."/>
            <person name="DiChristina T."/>
            <person name="Nealson K.H."/>
            <person name="Newman D."/>
            <person name="Tiedje J.M."/>
            <person name="Zhou J."/>
            <person name="Romine M.F."/>
            <person name="Culley D.E."/>
            <person name="Serres M."/>
            <person name="Chertkov O."/>
            <person name="Brettin T."/>
            <person name="Bruce D."/>
            <person name="Han C."/>
            <person name="Tapia R."/>
            <person name="Gilna P."/>
            <person name="Schmutz J."/>
            <person name="Larimer F."/>
            <person name="Land M."/>
            <person name="Hauser L."/>
            <person name="Kyrpides N."/>
            <person name="Mikhailova N."/>
            <person name="Richardson P."/>
        </authorList>
    </citation>
    <scope>NUCLEOTIDE SEQUENCE [LARGE SCALE GENOMIC DNA]</scope>
    <source>
        <strain>NCIMB 400</strain>
    </source>
</reference>
<gene>
    <name evidence="1" type="primary">sfsA</name>
    <name type="ordered locus">Sfri_3275</name>
</gene>